<organism>
    <name type="scientific">Escherichia coli (strain K12)</name>
    <dbReference type="NCBI Taxonomy" id="83333"/>
    <lineage>
        <taxon>Bacteria</taxon>
        <taxon>Pseudomonadati</taxon>
        <taxon>Pseudomonadota</taxon>
        <taxon>Gammaproteobacteria</taxon>
        <taxon>Enterobacterales</taxon>
        <taxon>Enterobacteriaceae</taxon>
        <taxon>Escherichia</taxon>
    </lineage>
</organism>
<comment type="induction">
    <text evidence="1">Identified when cells are grown in rich medium (at protein level).</text>
</comment>
<proteinExistence type="evidence at protein level"/>
<keyword id="KW-1185">Reference proteome</keyword>
<feature type="chain" id="PRO_0000454738" description="Protein YoeJ">
    <location>
        <begin position="1"/>
        <end position="16"/>
    </location>
</feature>
<sequence>MIVKRDKSIVICGSYE</sequence>
<name>YOEJ_ECOLI</name>
<evidence type="ECO:0000269" key="1">
    <source>
    </source>
</evidence>
<evidence type="ECO:0000303" key="2">
    <source>
    </source>
</evidence>
<evidence type="ECO:0000312" key="3">
    <source>
        <dbReference type="EMBL" id="UMR55114.1"/>
    </source>
</evidence>
<gene>
    <name evidence="2" type="primary">yoeJ</name>
    <name evidence="3" type="ordered locus">b4818</name>
</gene>
<reference key="1">
    <citation type="journal article" date="1997" name="Science">
        <title>The complete genome sequence of Escherichia coli K-12.</title>
        <authorList>
            <person name="Blattner F.R."/>
            <person name="Plunkett G. III"/>
            <person name="Bloch C.A."/>
            <person name="Perna N.T."/>
            <person name="Burland V."/>
            <person name="Riley M."/>
            <person name="Collado-Vides J."/>
            <person name="Glasner J.D."/>
            <person name="Rode C.K."/>
            <person name="Mayhew G.F."/>
            <person name="Gregor J."/>
            <person name="Davis N.W."/>
            <person name="Kirkpatrick H.A."/>
            <person name="Goeden M.A."/>
            <person name="Rose D.J."/>
            <person name="Mau B."/>
            <person name="Shao Y."/>
        </authorList>
    </citation>
    <scope>NUCLEOTIDE SEQUENCE [LARGE SCALE GENOMIC DNA]</scope>
    <source>
        <strain>K12 / MG1655 / ATCC 47076</strain>
    </source>
</reference>
<reference key="2">
    <citation type="journal article" date="2022" name="J. Bacteriol.">
        <title>Identification of novel translated small ORFs in Escherichia coli using complementary ribosome profiling approaches.</title>
        <authorList>
            <person name="Stringer A."/>
            <person name="Smith C."/>
            <person name="Mangano K."/>
            <person name="Wade J.T."/>
        </authorList>
    </citation>
    <scope>IDENTIFICATION</scope>
    <source>
        <strain>K12 / MG1655 / ATCC 47076</strain>
    </source>
</reference>
<accession>P0DUW3</accession>
<protein>
    <recommendedName>
        <fullName evidence="2">Protein YoeJ</fullName>
    </recommendedName>
</protein>
<dbReference type="EMBL" id="U00096">
    <property type="protein sequence ID" value="UMR55114.1"/>
    <property type="molecule type" value="Genomic_DNA"/>
</dbReference>
<dbReference type="InParanoid" id="P0DUW3"/>
<dbReference type="BioCyc" id="EcoCyc:MONOMER0-4546"/>
<dbReference type="Proteomes" id="UP000000625">
    <property type="component" value="Chromosome"/>
</dbReference>